<organism>
    <name type="scientific">Caulobacter sp. (strain K31)</name>
    <dbReference type="NCBI Taxonomy" id="366602"/>
    <lineage>
        <taxon>Bacteria</taxon>
        <taxon>Pseudomonadati</taxon>
        <taxon>Pseudomonadota</taxon>
        <taxon>Alphaproteobacteria</taxon>
        <taxon>Caulobacterales</taxon>
        <taxon>Caulobacteraceae</taxon>
        <taxon>Caulobacter</taxon>
    </lineage>
</organism>
<proteinExistence type="inferred from homology"/>
<keyword id="KW-0687">Ribonucleoprotein</keyword>
<keyword id="KW-0689">Ribosomal protein</keyword>
<keyword id="KW-0694">RNA-binding</keyword>
<keyword id="KW-0699">rRNA-binding</keyword>
<gene>
    <name evidence="1" type="primary">rpsF</name>
    <name type="ordered locus">Caul_2512</name>
</gene>
<name>RS6_CAUSK</name>
<dbReference type="EMBL" id="CP000927">
    <property type="protein sequence ID" value="ABZ71639.1"/>
    <property type="molecule type" value="Genomic_DNA"/>
</dbReference>
<dbReference type="SMR" id="B0SWL1"/>
<dbReference type="STRING" id="366602.Caul_2512"/>
<dbReference type="KEGG" id="cak:Caul_2512"/>
<dbReference type="eggNOG" id="COG0360">
    <property type="taxonomic scope" value="Bacteria"/>
</dbReference>
<dbReference type="HOGENOM" id="CLU_113441_2_0_5"/>
<dbReference type="OrthoDB" id="9812702at2"/>
<dbReference type="GO" id="GO:0022627">
    <property type="term" value="C:cytosolic small ribosomal subunit"/>
    <property type="evidence" value="ECO:0007669"/>
    <property type="project" value="TreeGrafter"/>
</dbReference>
<dbReference type="GO" id="GO:0070181">
    <property type="term" value="F:small ribosomal subunit rRNA binding"/>
    <property type="evidence" value="ECO:0007669"/>
    <property type="project" value="TreeGrafter"/>
</dbReference>
<dbReference type="GO" id="GO:0003735">
    <property type="term" value="F:structural constituent of ribosome"/>
    <property type="evidence" value="ECO:0007669"/>
    <property type="project" value="InterPro"/>
</dbReference>
<dbReference type="GO" id="GO:0006412">
    <property type="term" value="P:translation"/>
    <property type="evidence" value="ECO:0007669"/>
    <property type="project" value="UniProtKB-UniRule"/>
</dbReference>
<dbReference type="CDD" id="cd00473">
    <property type="entry name" value="bS6"/>
    <property type="match status" value="1"/>
</dbReference>
<dbReference type="Gene3D" id="3.30.70.60">
    <property type="match status" value="1"/>
</dbReference>
<dbReference type="HAMAP" id="MF_00360">
    <property type="entry name" value="Ribosomal_bS6"/>
    <property type="match status" value="1"/>
</dbReference>
<dbReference type="InterPro" id="IPR000529">
    <property type="entry name" value="Ribosomal_bS6"/>
</dbReference>
<dbReference type="InterPro" id="IPR035980">
    <property type="entry name" value="Ribosomal_bS6_sf"/>
</dbReference>
<dbReference type="InterPro" id="IPR020814">
    <property type="entry name" value="Ribosomal_S6_plastid/chlpt"/>
</dbReference>
<dbReference type="InterPro" id="IPR014717">
    <property type="entry name" value="Transl_elong_EF1B/ribsomal_bS6"/>
</dbReference>
<dbReference type="NCBIfam" id="TIGR00166">
    <property type="entry name" value="S6"/>
    <property type="match status" value="1"/>
</dbReference>
<dbReference type="PANTHER" id="PTHR21011">
    <property type="entry name" value="MITOCHONDRIAL 28S RIBOSOMAL PROTEIN S6"/>
    <property type="match status" value="1"/>
</dbReference>
<dbReference type="PANTHER" id="PTHR21011:SF1">
    <property type="entry name" value="SMALL RIBOSOMAL SUBUNIT PROTEIN BS6M"/>
    <property type="match status" value="1"/>
</dbReference>
<dbReference type="Pfam" id="PF01250">
    <property type="entry name" value="Ribosomal_S6"/>
    <property type="match status" value="1"/>
</dbReference>
<dbReference type="SUPFAM" id="SSF54995">
    <property type="entry name" value="Ribosomal protein S6"/>
    <property type="match status" value="1"/>
</dbReference>
<protein>
    <recommendedName>
        <fullName evidence="1">Small ribosomal subunit protein bS6</fullName>
    </recommendedName>
    <alternativeName>
        <fullName evidence="3">30S ribosomal protein S6</fullName>
    </alternativeName>
</protein>
<evidence type="ECO:0000255" key="1">
    <source>
        <dbReference type="HAMAP-Rule" id="MF_00360"/>
    </source>
</evidence>
<evidence type="ECO:0000256" key="2">
    <source>
        <dbReference type="SAM" id="MobiDB-lite"/>
    </source>
</evidence>
<evidence type="ECO:0000305" key="3"/>
<reference key="1">
    <citation type="submission" date="2008-01" db="EMBL/GenBank/DDBJ databases">
        <title>Complete sequence of chromosome of Caulobacter sp. K31.</title>
        <authorList>
            <consortium name="US DOE Joint Genome Institute"/>
            <person name="Copeland A."/>
            <person name="Lucas S."/>
            <person name="Lapidus A."/>
            <person name="Barry K."/>
            <person name="Glavina del Rio T."/>
            <person name="Dalin E."/>
            <person name="Tice H."/>
            <person name="Pitluck S."/>
            <person name="Bruce D."/>
            <person name="Goodwin L."/>
            <person name="Thompson L.S."/>
            <person name="Brettin T."/>
            <person name="Detter J.C."/>
            <person name="Han C."/>
            <person name="Schmutz J."/>
            <person name="Larimer F."/>
            <person name="Land M."/>
            <person name="Hauser L."/>
            <person name="Kyrpides N."/>
            <person name="Kim E."/>
            <person name="Stephens C."/>
            <person name="Richardson P."/>
        </authorList>
    </citation>
    <scope>NUCLEOTIDE SEQUENCE [LARGE SCALE GENOMIC DNA]</scope>
    <source>
        <strain>K31</strain>
    </source>
</reference>
<comment type="function">
    <text evidence="1">Binds together with bS18 to 16S ribosomal RNA.</text>
</comment>
<comment type="similarity">
    <text evidence="1">Belongs to the bacterial ribosomal protein bS6 family.</text>
</comment>
<feature type="chain" id="PRO_1000079437" description="Small ribosomal subunit protein bS6">
    <location>
        <begin position="1"/>
        <end position="126"/>
    </location>
</feature>
<feature type="region of interest" description="Disordered" evidence="2">
    <location>
        <begin position="107"/>
        <end position="126"/>
    </location>
</feature>
<sequence>MAFYEHVVIARQDISPQQAEALNEQLKALLEENGGHIAKIEYWGLRNLTYRIKKNRKGHYSLLAIDAPAAAVKEMERQLLINEDVLRFMTIRVEELDLELSPVLARRDRERGERSERPRDDFAPAA</sequence>
<accession>B0SWL1</accession>